<evidence type="ECO:0000250" key="1"/>
<evidence type="ECO:0000256" key="2">
    <source>
        <dbReference type="SAM" id="MobiDB-lite"/>
    </source>
</evidence>
<evidence type="ECO:0000305" key="3"/>
<dbReference type="EMBL" id="CR380951">
    <property type="protein sequence ID" value="CAG58827.1"/>
    <property type="molecule type" value="Genomic_DNA"/>
</dbReference>
<dbReference type="RefSeq" id="XP_445908.1">
    <property type="nucleotide sequence ID" value="XM_445908.1"/>
</dbReference>
<dbReference type="SMR" id="Q6FV36"/>
<dbReference type="FunCoup" id="Q6FV36">
    <property type="interactions" value="250"/>
</dbReference>
<dbReference type="STRING" id="284593.Q6FV36"/>
<dbReference type="EnsemblFungi" id="CAGL0E05060g-T">
    <property type="protein sequence ID" value="CAGL0E05060g-T-p1"/>
    <property type="gene ID" value="CAGL0E05060g"/>
</dbReference>
<dbReference type="GeneID" id="2887379"/>
<dbReference type="KEGG" id="cgr:2887379"/>
<dbReference type="CGD" id="CAL0129110">
    <property type="gene designation" value="NUT1"/>
</dbReference>
<dbReference type="VEuPathDB" id="FungiDB:CAGL0E05060g"/>
<dbReference type="eggNOG" id="ENOG502R1HB">
    <property type="taxonomic scope" value="Eukaryota"/>
</dbReference>
<dbReference type="HOGENOM" id="CLU_281615_0_0_1"/>
<dbReference type="InParanoid" id="Q6FV36"/>
<dbReference type="OMA" id="FTCFAQF"/>
<dbReference type="Proteomes" id="UP000002428">
    <property type="component" value="Chromosome E"/>
</dbReference>
<dbReference type="GO" id="GO:0070847">
    <property type="term" value="C:core mediator complex"/>
    <property type="evidence" value="ECO:0007669"/>
    <property type="project" value="EnsemblFungi"/>
</dbReference>
<dbReference type="GO" id="GO:0016592">
    <property type="term" value="C:mediator complex"/>
    <property type="evidence" value="ECO:0007669"/>
    <property type="project" value="EnsemblFungi"/>
</dbReference>
<dbReference type="GO" id="GO:0003712">
    <property type="term" value="F:transcription coregulator activity"/>
    <property type="evidence" value="ECO:0007669"/>
    <property type="project" value="InterPro"/>
</dbReference>
<dbReference type="GO" id="GO:0032968">
    <property type="term" value="P:positive regulation of transcription elongation by RNA polymerase II"/>
    <property type="evidence" value="ECO:0007669"/>
    <property type="project" value="EnsemblFungi"/>
</dbReference>
<dbReference type="GO" id="GO:0060261">
    <property type="term" value="P:positive regulation of transcription initiation by RNA polymerase II"/>
    <property type="evidence" value="ECO:0007669"/>
    <property type="project" value="EnsemblFungi"/>
</dbReference>
<dbReference type="GO" id="GO:0051123">
    <property type="term" value="P:RNA polymerase II preinitiation complex assembly"/>
    <property type="evidence" value="ECO:0007669"/>
    <property type="project" value="EnsemblFungi"/>
</dbReference>
<dbReference type="InterPro" id="IPR014801">
    <property type="entry name" value="Mediator_Med5_fun"/>
</dbReference>
<dbReference type="PANTHER" id="PTHR35784">
    <property type="entry name" value="MEDIATOR OF RNA POLYMERASE II TRANSCRIPTION SUBUNIT 5"/>
    <property type="match status" value="1"/>
</dbReference>
<dbReference type="PANTHER" id="PTHR35784:SF1">
    <property type="entry name" value="MEDIATOR OF RNA POLYMERASE II TRANSCRIPTION SUBUNIT 5"/>
    <property type="match status" value="1"/>
</dbReference>
<dbReference type="Pfam" id="PF08689">
    <property type="entry name" value="Med5"/>
    <property type="match status" value="1"/>
</dbReference>
<reference key="1">
    <citation type="journal article" date="2004" name="Nature">
        <title>Genome evolution in yeasts.</title>
        <authorList>
            <person name="Dujon B."/>
            <person name="Sherman D."/>
            <person name="Fischer G."/>
            <person name="Durrens P."/>
            <person name="Casaregola S."/>
            <person name="Lafontaine I."/>
            <person name="de Montigny J."/>
            <person name="Marck C."/>
            <person name="Neuveglise C."/>
            <person name="Talla E."/>
            <person name="Goffard N."/>
            <person name="Frangeul L."/>
            <person name="Aigle M."/>
            <person name="Anthouard V."/>
            <person name="Babour A."/>
            <person name="Barbe V."/>
            <person name="Barnay S."/>
            <person name="Blanchin S."/>
            <person name="Beckerich J.-M."/>
            <person name="Beyne E."/>
            <person name="Bleykasten C."/>
            <person name="Boisrame A."/>
            <person name="Boyer J."/>
            <person name="Cattolico L."/>
            <person name="Confanioleri F."/>
            <person name="de Daruvar A."/>
            <person name="Despons L."/>
            <person name="Fabre E."/>
            <person name="Fairhead C."/>
            <person name="Ferry-Dumazet H."/>
            <person name="Groppi A."/>
            <person name="Hantraye F."/>
            <person name="Hennequin C."/>
            <person name="Jauniaux N."/>
            <person name="Joyet P."/>
            <person name="Kachouri R."/>
            <person name="Kerrest A."/>
            <person name="Koszul R."/>
            <person name="Lemaire M."/>
            <person name="Lesur I."/>
            <person name="Ma L."/>
            <person name="Muller H."/>
            <person name="Nicaud J.-M."/>
            <person name="Nikolski M."/>
            <person name="Oztas S."/>
            <person name="Ozier-Kalogeropoulos O."/>
            <person name="Pellenz S."/>
            <person name="Potier S."/>
            <person name="Richard G.-F."/>
            <person name="Straub M.-L."/>
            <person name="Suleau A."/>
            <person name="Swennen D."/>
            <person name="Tekaia F."/>
            <person name="Wesolowski-Louvel M."/>
            <person name="Westhof E."/>
            <person name="Wirth B."/>
            <person name="Zeniou-Meyer M."/>
            <person name="Zivanovic Y."/>
            <person name="Bolotin-Fukuhara M."/>
            <person name="Thierry A."/>
            <person name="Bouchier C."/>
            <person name="Caudron B."/>
            <person name="Scarpelli C."/>
            <person name="Gaillardin C."/>
            <person name="Weissenbach J."/>
            <person name="Wincker P."/>
            <person name="Souciet J.-L."/>
        </authorList>
    </citation>
    <scope>NUCLEOTIDE SEQUENCE [LARGE SCALE GENOMIC DNA]</scope>
    <source>
        <strain>ATCC 2001 / BCRC 20586 / JCM 3761 / NBRC 0622 / NRRL Y-65 / CBS 138</strain>
    </source>
</reference>
<proteinExistence type="inferred from homology"/>
<sequence>MESKSLNTLALRCAARKIPASEFLNLYKEFYNETFPANSIDNDDAKTQEGSGSQDKTDVEESISKPVGSKNDPVAILCAEFMKLLENGKYVILADYVVEVLFVNYHSELVREFLPKLKDLMNKGILIHFFSKSCAFFVNLTDNLVISQLIKDLRATIVPCILETNFCDISNELVVAIAKFLQAVLRFTPQPIQINSETYRDNTFNLTKRLSLINKILSKKFAGIIDKKLQFKEVLGPFTKDSTLDFDNSPSITSPQFIPSPLPSMKERSVTSSQSAIKYKDLKLLRYYKNIWLNSKLMNWQPFDSEFISNYSAIKSSLYPDQVQNIQNVDLLFTDLIETAFTCFAQFVSNKLYHQSNSTYNLLERKWILFLSKILPLLVYKNSSRTAHVIGNALDGIDDKVIKAISAYYQENDDGRSRNDDLFDDYPSTSLDIRHDFIKSLTMLGVVPPVFITNYLRGDQTVDSKALATTDDLTFTNQQGIIEIVNDIPNFIRSSLEGMEMENVSEPTLVSSNGLLQVLSNFDTVSPTKQFELANAIVDMLSESSTTFELNTFVKLTAVLTFNYSHSLTSILMYVTPEVLTKLYLEFVDKHWNSQVIGKQETDGESQFENVNISMSFSWAILMLTILYKQYHIDFVSMRADYTTDNIKNSFAITFVENLPDISDLFFIDEKNSDDPEVQVKSHKLVRDWLNDLFVNGSLSDSLLQNIEPKQLAILVPYIFKQVTLAMEIGAVGDLQNLIGGFEYFLQPFMLVGLIKVMYWLEQYLSCLKSDETDEKLIQKVLSLLNTIICPSTLNEDSKAFHFAVLRLNAIPLLGILYQFRSNKHAESNYGIYSSDNEGNPTLELMISRLISSLSISPVYDIDSTILVTDNNFVQKPPKFQSFFVTNEISMNKMLTNQMNSFWSLHSSTYYNLDFLKTLIDTLTPKQFLLDVLRTLEYKVETLGVKDVRNKSSSNESDQVIDYLFYFLVLYDIENSEDAKAMAQFMEDTVDISINGDSGIVKQETQPKSEYNPDDDIDMLFGENDTSMQANEEDTLDNKELKSDRNCALGKNRHTFGFIIHEIKLSYGTLESDSMSYEDYKKICEYHSRYLKMLKTCIF</sequence>
<accession>Q6FV36</accession>
<name>MED5_CANGA</name>
<gene>
    <name type="primary">NUT1</name>
    <name type="synonym">MED5</name>
    <name type="ordered locus">CAGL0E05060g</name>
</gene>
<keyword id="KW-0010">Activator</keyword>
<keyword id="KW-0539">Nucleus</keyword>
<keyword id="KW-1185">Reference proteome</keyword>
<keyword id="KW-0804">Transcription</keyword>
<keyword id="KW-0805">Transcription regulation</keyword>
<comment type="function">
    <text evidence="1">Component of the Mediator complex, a coactivator involved in the regulated transcription of nearly all RNA polymerase II-dependent genes. Mediator functions as a bridge to convey information from gene-specific regulatory proteins to the basal RNA polymerase II transcription machinery. Mediator is recruited to promoters by direct interactions with regulatory proteins and serves as a scaffold for the assembly of a functional preinitiation complex with RNA polymerase II and the general transcription factors (By similarity).</text>
</comment>
<comment type="subunit">
    <text evidence="1">Component of the Mediator complex.</text>
</comment>
<comment type="subcellular location">
    <subcellularLocation>
        <location evidence="1">Nucleus</location>
    </subcellularLocation>
</comment>
<comment type="similarity">
    <text evidence="3">Belongs to the Mediator complex subunit 5 family.</text>
</comment>
<organism>
    <name type="scientific">Candida glabrata (strain ATCC 2001 / BCRC 20586 / JCM 3761 / NBRC 0622 / NRRL Y-65 / CBS 138)</name>
    <name type="common">Yeast</name>
    <name type="synonym">Nakaseomyces glabratus</name>
    <dbReference type="NCBI Taxonomy" id="284593"/>
    <lineage>
        <taxon>Eukaryota</taxon>
        <taxon>Fungi</taxon>
        <taxon>Dikarya</taxon>
        <taxon>Ascomycota</taxon>
        <taxon>Saccharomycotina</taxon>
        <taxon>Saccharomycetes</taxon>
        <taxon>Saccharomycetales</taxon>
        <taxon>Saccharomycetaceae</taxon>
        <taxon>Nakaseomyces</taxon>
    </lineage>
</organism>
<feature type="chain" id="PRO_0000302771" description="Mediator of RNA polymerase II transcription subunit 5">
    <location>
        <begin position="1"/>
        <end position="1099"/>
    </location>
</feature>
<feature type="region of interest" description="Disordered" evidence="2">
    <location>
        <begin position="41"/>
        <end position="66"/>
    </location>
</feature>
<protein>
    <recommendedName>
        <fullName>Mediator of RNA polymerase II transcription subunit 5</fullName>
    </recommendedName>
    <alternativeName>
        <fullName>Mediator complex subunit 5</fullName>
    </alternativeName>
</protein>